<comment type="function">
    <text evidence="1">Required for rescue of stalled ribosomes mediated by trans-translation. Binds to transfer-messenger RNA (tmRNA), required for stable association of tmRNA with ribosomes. tmRNA and SmpB together mimic tRNA shape, replacing the anticodon stem-loop with SmpB. tmRNA is encoded by the ssrA gene; the 2 termini fold to resemble tRNA(Ala) and it encodes a 'tag peptide', a short internal open reading frame. During trans-translation Ala-aminoacylated tmRNA acts like a tRNA, entering the A-site of stalled ribosomes, displacing the stalled mRNA. The ribosome then switches to translate the ORF on the tmRNA; the nascent peptide is terminated with the 'tag peptide' encoded by the tmRNA and targeted for degradation. The ribosome is freed to recommence translation, which seems to be the essential function of trans-translation.</text>
</comment>
<comment type="subcellular location">
    <subcellularLocation>
        <location evidence="1">Cytoplasm</location>
    </subcellularLocation>
    <text evidence="1">The tmRNA-SmpB complex associates with stalled 70S ribosomes.</text>
</comment>
<comment type="similarity">
    <text evidence="1">Belongs to the SmpB family.</text>
</comment>
<feature type="chain" id="PRO_0000331071" description="SsrA-binding protein">
    <location>
        <begin position="1"/>
        <end position="156"/>
    </location>
</feature>
<reference key="1">
    <citation type="submission" date="2006-12" db="EMBL/GenBank/DDBJ databases">
        <title>Complete sequence of chromosome 1 of Paracoccus denitrificans PD1222.</title>
        <authorList>
            <person name="Copeland A."/>
            <person name="Lucas S."/>
            <person name="Lapidus A."/>
            <person name="Barry K."/>
            <person name="Detter J.C."/>
            <person name="Glavina del Rio T."/>
            <person name="Hammon N."/>
            <person name="Israni S."/>
            <person name="Dalin E."/>
            <person name="Tice H."/>
            <person name="Pitluck S."/>
            <person name="Munk A.C."/>
            <person name="Brettin T."/>
            <person name="Bruce D."/>
            <person name="Han C."/>
            <person name="Tapia R."/>
            <person name="Gilna P."/>
            <person name="Schmutz J."/>
            <person name="Larimer F."/>
            <person name="Land M."/>
            <person name="Hauser L."/>
            <person name="Kyrpides N."/>
            <person name="Lykidis A."/>
            <person name="Spiro S."/>
            <person name="Richardson D.J."/>
            <person name="Moir J.W.B."/>
            <person name="Ferguson S.J."/>
            <person name="van Spanning R.J.M."/>
            <person name="Richardson P."/>
        </authorList>
    </citation>
    <scope>NUCLEOTIDE SEQUENCE [LARGE SCALE GENOMIC DNA]</scope>
    <source>
        <strain>Pd 1222</strain>
    </source>
</reference>
<proteinExistence type="inferred from homology"/>
<protein>
    <recommendedName>
        <fullName evidence="1">SsrA-binding protein</fullName>
    </recommendedName>
    <alternativeName>
        <fullName evidence="1">Small protein B</fullName>
    </alternativeName>
</protein>
<dbReference type="EMBL" id="CP000489">
    <property type="protein sequence ID" value="ABL68744.1"/>
    <property type="molecule type" value="Genomic_DNA"/>
</dbReference>
<dbReference type="RefSeq" id="WP_011746977.1">
    <property type="nucleotide sequence ID" value="NC_008686.1"/>
</dbReference>
<dbReference type="SMR" id="A1AZQ0"/>
<dbReference type="STRING" id="318586.Pden_0632"/>
<dbReference type="EnsemblBacteria" id="ABL68744">
    <property type="protein sequence ID" value="ABL68744"/>
    <property type="gene ID" value="Pden_0632"/>
</dbReference>
<dbReference type="GeneID" id="93451856"/>
<dbReference type="KEGG" id="pde:Pden_0632"/>
<dbReference type="eggNOG" id="COG0691">
    <property type="taxonomic scope" value="Bacteria"/>
</dbReference>
<dbReference type="HOGENOM" id="CLU_108953_0_1_5"/>
<dbReference type="OrthoDB" id="9805462at2"/>
<dbReference type="Proteomes" id="UP000000361">
    <property type="component" value="Chromosome 1"/>
</dbReference>
<dbReference type="GO" id="GO:0005829">
    <property type="term" value="C:cytosol"/>
    <property type="evidence" value="ECO:0007669"/>
    <property type="project" value="TreeGrafter"/>
</dbReference>
<dbReference type="GO" id="GO:0003723">
    <property type="term" value="F:RNA binding"/>
    <property type="evidence" value="ECO:0007669"/>
    <property type="project" value="UniProtKB-UniRule"/>
</dbReference>
<dbReference type="GO" id="GO:0070929">
    <property type="term" value="P:trans-translation"/>
    <property type="evidence" value="ECO:0007669"/>
    <property type="project" value="UniProtKB-UniRule"/>
</dbReference>
<dbReference type="CDD" id="cd09294">
    <property type="entry name" value="SmpB"/>
    <property type="match status" value="1"/>
</dbReference>
<dbReference type="Gene3D" id="2.40.280.10">
    <property type="match status" value="1"/>
</dbReference>
<dbReference type="HAMAP" id="MF_00023">
    <property type="entry name" value="SmpB"/>
    <property type="match status" value="1"/>
</dbReference>
<dbReference type="InterPro" id="IPR023620">
    <property type="entry name" value="SmpB"/>
</dbReference>
<dbReference type="InterPro" id="IPR000037">
    <property type="entry name" value="SsrA-bd_prot"/>
</dbReference>
<dbReference type="NCBIfam" id="NF003843">
    <property type="entry name" value="PRK05422.1"/>
    <property type="match status" value="1"/>
</dbReference>
<dbReference type="NCBIfam" id="TIGR00086">
    <property type="entry name" value="smpB"/>
    <property type="match status" value="1"/>
</dbReference>
<dbReference type="PANTHER" id="PTHR30308:SF2">
    <property type="entry name" value="SSRA-BINDING PROTEIN"/>
    <property type="match status" value="1"/>
</dbReference>
<dbReference type="PANTHER" id="PTHR30308">
    <property type="entry name" value="TMRNA-BINDING COMPONENT OF TRANS-TRANSLATION TAGGING COMPLEX"/>
    <property type="match status" value="1"/>
</dbReference>
<dbReference type="Pfam" id="PF01668">
    <property type="entry name" value="SmpB"/>
    <property type="match status" value="1"/>
</dbReference>
<dbReference type="SUPFAM" id="SSF74982">
    <property type="entry name" value="Small protein B (SmpB)"/>
    <property type="match status" value="1"/>
</dbReference>
<sequence>MATKSDPNYKIIAENRRARFDYFIESDLEVGIVLTGSEVKSLRTGQSNIAESYASVENGELWLINAYIAAYKQAGVFGHEERRRRKLLVSRKELARLWQAIGREGMTLVPLVMYFNDRGKVKLKIGVAKGKKVADKRETAAKRDWNRQKQRLLKQG</sequence>
<keyword id="KW-0963">Cytoplasm</keyword>
<keyword id="KW-1185">Reference proteome</keyword>
<keyword id="KW-0694">RNA-binding</keyword>
<name>SSRP_PARDP</name>
<accession>A1AZQ0</accession>
<gene>
    <name evidence="1" type="primary">smpB</name>
    <name type="ordered locus">Pden_0632</name>
</gene>
<evidence type="ECO:0000255" key="1">
    <source>
        <dbReference type="HAMAP-Rule" id="MF_00023"/>
    </source>
</evidence>
<organism>
    <name type="scientific">Paracoccus denitrificans (strain Pd 1222)</name>
    <dbReference type="NCBI Taxonomy" id="318586"/>
    <lineage>
        <taxon>Bacteria</taxon>
        <taxon>Pseudomonadati</taxon>
        <taxon>Pseudomonadota</taxon>
        <taxon>Alphaproteobacteria</taxon>
        <taxon>Rhodobacterales</taxon>
        <taxon>Paracoccaceae</taxon>
        <taxon>Paracoccus</taxon>
    </lineage>
</organism>